<dbReference type="EC" id="3.6.5.-" evidence="1"/>
<dbReference type="EMBL" id="CP000323">
    <property type="protein sequence ID" value="ABE75460.1"/>
    <property type="molecule type" value="Genomic_DNA"/>
</dbReference>
<dbReference type="SMR" id="Q1QA43"/>
<dbReference type="STRING" id="335284.Pcryo_1683"/>
<dbReference type="KEGG" id="pcr:Pcryo_1683"/>
<dbReference type="eggNOG" id="COG0536">
    <property type="taxonomic scope" value="Bacteria"/>
</dbReference>
<dbReference type="HOGENOM" id="CLU_011747_2_0_6"/>
<dbReference type="Proteomes" id="UP000002425">
    <property type="component" value="Chromosome"/>
</dbReference>
<dbReference type="GO" id="GO:0005737">
    <property type="term" value="C:cytoplasm"/>
    <property type="evidence" value="ECO:0007669"/>
    <property type="project" value="UniProtKB-SubCell"/>
</dbReference>
<dbReference type="GO" id="GO:0005525">
    <property type="term" value="F:GTP binding"/>
    <property type="evidence" value="ECO:0007669"/>
    <property type="project" value="UniProtKB-UniRule"/>
</dbReference>
<dbReference type="GO" id="GO:0003924">
    <property type="term" value="F:GTPase activity"/>
    <property type="evidence" value="ECO:0007669"/>
    <property type="project" value="UniProtKB-UniRule"/>
</dbReference>
<dbReference type="GO" id="GO:0000287">
    <property type="term" value="F:magnesium ion binding"/>
    <property type="evidence" value="ECO:0007669"/>
    <property type="project" value="InterPro"/>
</dbReference>
<dbReference type="GO" id="GO:0042254">
    <property type="term" value="P:ribosome biogenesis"/>
    <property type="evidence" value="ECO:0007669"/>
    <property type="project" value="UniProtKB-UniRule"/>
</dbReference>
<dbReference type="CDD" id="cd01898">
    <property type="entry name" value="Obg"/>
    <property type="match status" value="1"/>
</dbReference>
<dbReference type="FunFam" id="2.70.210.12:FF:000001">
    <property type="entry name" value="GTPase Obg"/>
    <property type="match status" value="1"/>
</dbReference>
<dbReference type="Gene3D" id="2.70.210.12">
    <property type="entry name" value="GTP1/OBG domain"/>
    <property type="match status" value="1"/>
</dbReference>
<dbReference type="Gene3D" id="3.40.50.300">
    <property type="entry name" value="P-loop containing nucleotide triphosphate hydrolases"/>
    <property type="match status" value="1"/>
</dbReference>
<dbReference type="HAMAP" id="MF_01454">
    <property type="entry name" value="GTPase_Obg"/>
    <property type="match status" value="1"/>
</dbReference>
<dbReference type="InterPro" id="IPR031167">
    <property type="entry name" value="G_OBG"/>
</dbReference>
<dbReference type="InterPro" id="IPR006073">
    <property type="entry name" value="GTP-bd"/>
</dbReference>
<dbReference type="InterPro" id="IPR014100">
    <property type="entry name" value="GTP-bd_Obg/CgtA"/>
</dbReference>
<dbReference type="InterPro" id="IPR006074">
    <property type="entry name" value="GTP1-OBG_CS"/>
</dbReference>
<dbReference type="InterPro" id="IPR006169">
    <property type="entry name" value="GTP1_OBG_dom"/>
</dbReference>
<dbReference type="InterPro" id="IPR036726">
    <property type="entry name" value="GTP1_OBG_dom_sf"/>
</dbReference>
<dbReference type="InterPro" id="IPR045086">
    <property type="entry name" value="OBG_GTPase"/>
</dbReference>
<dbReference type="InterPro" id="IPR027417">
    <property type="entry name" value="P-loop_NTPase"/>
</dbReference>
<dbReference type="NCBIfam" id="TIGR02729">
    <property type="entry name" value="Obg_CgtA"/>
    <property type="match status" value="1"/>
</dbReference>
<dbReference type="NCBIfam" id="NF008955">
    <property type="entry name" value="PRK12297.1"/>
    <property type="match status" value="1"/>
</dbReference>
<dbReference type="NCBIfam" id="NF008956">
    <property type="entry name" value="PRK12299.1"/>
    <property type="match status" value="1"/>
</dbReference>
<dbReference type="PANTHER" id="PTHR11702">
    <property type="entry name" value="DEVELOPMENTALLY REGULATED GTP-BINDING PROTEIN-RELATED"/>
    <property type="match status" value="1"/>
</dbReference>
<dbReference type="PANTHER" id="PTHR11702:SF31">
    <property type="entry name" value="MITOCHONDRIAL RIBOSOME-ASSOCIATED GTPASE 2"/>
    <property type="match status" value="1"/>
</dbReference>
<dbReference type="Pfam" id="PF01018">
    <property type="entry name" value="GTP1_OBG"/>
    <property type="match status" value="1"/>
</dbReference>
<dbReference type="Pfam" id="PF01926">
    <property type="entry name" value="MMR_HSR1"/>
    <property type="match status" value="1"/>
</dbReference>
<dbReference type="PIRSF" id="PIRSF002401">
    <property type="entry name" value="GTP_bd_Obg/CgtA"/>
    <property type="match status" value="1"/>
</dbReference>
<dbReference type="PRINTS" id="PR00326">
    <property type="entry name" value="GTP1OBG"/>
</dbReference>
<dbReference type="SUPFAM" id="SSF82051">
    <property type="entry name" value="Obg GTP-binding protein N-terminal domain"/>
    <property type="match status" value="1"/>
</dbReference>
<dbReference type="SUPFAM" id="SSF52540">
    <property type="entry name" value="P-loop containing nucleoside triphosphate hydrolases"/>
    <property type="match status" value="1"/>
</dbReference>
<dbReference type="PROSITE" id="PS51710">
    <property type="entry name" value="G_OBG"/>
    <property type="match status" value="1"/>
</dbReference>
<dbReference type="PROSITE" id="PS00905">
    <property type="entry name" value="GTP1_OBG"/>
    <property type="match status" value="1"/>
</dbReference>
<dbReference type="PROSITE" id="PS51883">
    <property type="entry name" value="OBG"/>
    <property type="match status" value="1"/>
</dbReference>
<evidence type="ECO:0000255" key="1">
    <source>
        <dbReference type="HAMAP-Rule" id="MF_01454"/>
    </source>
</evidence>
<evidence type="ECO:0000255" key="2">
    <source>
        <dbReference type="PROSITE-ProRule" id="PRU01231"/>
    </source>
</evidence>
<evidence type="ECO:0000256" key="3">
    <source>
        <dbReference type="SAM" id="MobiDB-lite"/>
    </source>
</evidence>
<proteinExistence type="inferred from homology"/>
<keyword id="KW-0963">Cytoplasm</keyword>
<keyword id="KW-0342">GTP-binding</keyword>
<keyword id="KW-0378">Hydrolase</keyword>
<keyword id="KW-0460">Magnesium</keyword>
<keyword id="KW-0479">Metal-binding</keyword>
<keyword id="KW-0547">Nucleotide-binding</keyword>
<reference key="1">
    <citation type="submission" date="2006-03" db="EMBL/GenBank/DDBJ databases">
        <title>Complete sequence of chromosome of Psychrobacter cryohalolentis K5.</title>
        <authorList>
            <consortium name="US DOE Joint Genome Institute"/>
            <person name="Copeland A."/>
            <person name="Lucas S."/>
            <person name="Lapidus A."/>
            <person name="Barry K."/>
            <person name="Detter J.C."/>
            <person name="Glavina T."/>
            <person name="Hammon N."/>
            <person name="Israni S."/>
            <person name="Dalin E."/>
            <person name="Tice H."/>
            <person name="Pitluck S."/>
            <person name="Brettin T."/>
            <person name="Bruce D."/>
            <person name="Han C."/>
            <person name="Tapia R."/>
            <person name="Sims D.R."/>
            <person name="Gilna P."/>
            <person name="Schmutz J."/>
            <person name="Larimer F."/>
            <person name="Land M."/>
            <person name="Hauser L."/>
            <person name="Kyrpides N."/>
            <person name="Kim E."/>
            <person name="Richardson P."/>
        </authorList>
    </citation>
    <scope>NUCLEOTIDE SEQUENCE [LARGE SCALE GENOMIC DNA]</scope>
    <source>
        <strain>ATCC BAA-1226 / DSM 17306 / VKM B-2378 / K5</strain>
    </source>
</reference>
<comment type="function">
    <text evidence="1">An essential GTPase which binds GTP, GDP and possibly (p)ppGpp with moderate affinity, with high nucleotide exchange rates and a fairly low GTP hydrolysis rate. Plays a role in control of the cell cycle, stress response, ribosome biogenesis and in those bacteria that undergo differentiation, in morphogenesis control.</text>
</comment>
<comment type="cofactor">
    <cofactor evidence="1">
        <name>Mg(2+)</name>
        <dbReference type="ChEBI" id="CHEBI:18420"/>
    </cofactor>
</comment>
<comment type="subunit">
    <text evidence="1">Monomer.</text>
</comment>
<comment type="subcellular location">
    <subcellularLocation>
        <location evidence="1">Cytoplasm</location>
    </subcellularLocation>
</comment>
<comment type="similarity">
    <text evidence="1">Belongs to the TRAFAC class OBG-HflX-like GTPase superfamily. OBG GTPase family.</text>
</comment>
<sequence>MRFIDEAVVTVKAGDGGNGIASFRREKYVPRGGPDGGDGGKGGDVYVIAEDNTNTLVDYRYTRRHDAMRAENGHSRNCSGKGSDDLFLPVPIGTTVVDTETDEVLGDLIEIGQTLLIAKGGDGGLGNTHFKSSTNQAPRKATSGFEGELKVLKFELKVVADVGLIGLPNAGKSTFIRQVSAARPKVADYPFTTLVPNLGVVDIGRHRSFVMADIPGLIEGASEGAGLGIRFLKHVARTRRLLHLVDIKPIDGSDPVENARVILNELERFSPELANLPQILVLNKIDQVPEEELNELCTHIVAELGWTGIVFRTATLTGEGVDAIKYHLMNEIEREREREIEDPIFADAQKARFERLEAEVRLNTEAQREAYRAARKAAREGTDLSDDDFDDSDDDDDGVEVVYAP</sequence>
<gene>
    <name evidence="1" type="primary">obg</name>
    <name type="ordered locus">Pcryo_1683</name>
</gene>
<name>OBG_PSYCK</name>
<organism>
    <name type="scientific">Psychrobacter cryohalolentis (strain ATCC BAA-1226 / DSM 17306 / VKM B-2378 / K5)</name>
    <dbReference type="NCBI Taxonomy" id="335284"/>
    <lineage>
        <taxon>Bacteria</taxon>
        <taxon>Pseudomonadati</taxon>
        <taxon>Pseudomonadota</taxon>
        <taxon>Gammaproteobacteria</taxon>
        <taxon>Moraxellales</taxon>
        <taxon>Moraxellaceae</taxon>
        <taxon>Psychrobacter</taxon>
    </lineage>
</organism>
<feature type="chain" id="PRO_0000386166" description="GTPase Obg">
    <location>
        <begin position="1"/>
        <end position="405"/>
    </location>
</feature>
<feature type="domain" description="Obg" evidence="2">
    <location>
        <begin position="1"/>
        <end position="159"/>
    </location>
</feature>
<feature type="domain" description="OBG-type G" evidence="1">
    <location>
        <begin position="160"/>
        <end position="333"/>
    </location>
</feature>
<feature type="region of interest" description="Disordered" evidence="3">
    <location>
        <begin position="371"/>
        <end position="405"/>
    </location>
</feature>
<feature type="compositionally biased region" description="Basic and acidic residues" evidence="3">
    <location>
        <begin position="371"/>
        <end position="382"/>
    </location>
</feature>
<feature type="compositionally biased region" description="Acidic residues" evidence="3">
    <location>
        <begin position="383"/>
        <end position="399"/>
    </location>
</feature>
<feature type="binding site" evidence="1">
    <location>
        <begin position="166"/>
        <end position="173"/>
    </location>
    <ligand>
        <name>GTP</name>
        <dbReference type="ChEBI" id="CHEBI:37565"/>
    </ligand>
</feature>
<feature type="binding site" evidence="1">
    <location>
        <position position="173"/>
    </location>
    <ligand>
        <name>Mg(2+)</name>
        <dbReference type="ChEBI" id="CHEBI:18420"/>
    </ligand>
</feature>
<feature type="binding site" evidence="1">
    <location>
        <begin position="191"/>
        <end position="195"/>
    </location>
    <ligand>
        <name>GTP</name>
        <dbReference type="ChEBI" id="CHEBI:37565"/>
    </ligand>
</feature>
<feature type="binding site" evidence="1">
    <location>
        <position position="193"/>
    </location>
    <ligand>
        <name>Mg(2+)</name>
        <dbReference type="ChEBI" id="CHEBI:18420"/>
    </ligand>
</feature>
<feature type="binding site" evidence="1">
    <location>
        <begin position="213"/>
        <end position="216"/>
    </location>
    <ligand>
        <name>GTP</name>
        <dbReference type="ChEBI" id="CHEBI:37565"/>
    </ligand>
</feature>
<feature type="binding site" evidence="1">
    <location>
        <begin position="283"/>
        <end position="286"/>
    </location>
    <ligand>
        <name>GTP</name>
        <dbReference type="ChEBI" id="CHEBI:37565"/>
    </ligand>
</feature>
<feature type="binding site" evidence="1">
    <location>
        <begin position="314"/>
        <end position="316"/>
    </location>
    <ligand>
        <name>GTP</name>
        <dbReference type="ChEBI" id="CHEBI:37565"/>
    </ligand>
</feature>
<protein>
    <recommendedName>
        <fullName evidence="1">GTPase Obg</fullName>
        <ecNumber evidence="1">3.6.5.-</ecNumber>
    </recommendedName>
    <alternativeName>
        <fullName evidence="1">GTP-binding protein Obg</fullName>
    </alternativeName>
</protein>
<accession>Q1QA43</accession>